<comment type="function">
    <text evidence="4">Catalyzes the conjugation of the 1'-hydroxyl group of D-myo-inositol-3-phosphate (also named L-myo-inositol-1-phosphate) with a lipid tail of cytidine diphosphate diacylglycerol (CDP-DAG), forming phosphatidylinositol phosphate (PIP) and CMP. PIP is a precursor of phosphatidylinositol (PI) which is an essential lipid for mycobacteria required for formation of their cell wall.</text>
</comment>
<comment type="catalytic activity">
    <reaction evidence="4">
        <text>a CDP-1,2-diacyl-sn-glycerol + 1D-myo-inositol 3-phosphate = a 1,2-diacyl-sn-glycero-3-phospho-(1D-myo-inositol-3-phosphate) + CMP + H(+)</text>
        <dbReference type="Rhea" id="RHEA:60504"/>
        <dbReference type="ChEBI" id="CHEBI:15378"/>
        <dbReference type="ChEBI" id="CHEBI:58088"/>
        <dbReference type="ChEBI" id="CHEBI:58332"/>
        <dbReference type="ChEBI" id="CHEBI:58401"/>
        <dbReference type="ChEBI" id="CHEBI:60377"/>
    </reaction>
</comment>
<comment type="catalytic activity">
    <reaction evidence="4">
        <text>1,2-di-(9Z-octadecenoyl)-sn-glycero-3-cytidine-5'-diphosphate + 1D-myo-inositol 3-phosphate = 1,2-di-(9Z-octadecenoyl)-sn-glycero-3-phospho-(1D-myo-inositol-3-phosphate) + CMP + H(+)</text>
        <dbReference type="Rhea" id="RHEA:61216"/>
        <dbReference type="ChEBI" id="CHEBI:15378"/>
        <dbReference type="ChEBI" id="CHEBI:58401"/>
        <dbReference type="ChEBI" id="CHEBI:60377"/>
        <dbReference type="ChEBI" id="CHEBI:85356"/>
        <dbReference type="ChEBI" id="CHEBI:144472"/>
    </reaction>
</comment>
<comment type="cofactor">
    <cofactor evidence="1">
        <name>Mg(2+)</name>
        <dbReference type="ChEBI" id="CHEBI:18420"/>
    </cofactor>
    <text evidence="1">Contains a di-nuclear catalytic Mg(2+) center.</text>
</comment>
<comment type="pathway">
    <text evidence="4">Phospholipid metabolism; phosphatidylinositol phosphate biosynthesis.</text>
</comment>
<comment type="subunit">
    <text evidence="1">Homodimer.</text>
</comment>
<comment type="subcellular location">
    <subcellularLocation>
        <location evidence="2">Cell membrane</location>
        <topology evidence="2">Multi-pass membrane protein</topology>
    </subcellularLocation>
</comment>
<comment type="similarity">
    <text evidence="3">Belongs to the CDP-alcohol phosphatidyltransferase class-I family.</text>
</comment>
<protein>
    <recommendedName>
        <fullName evidence="5">Phosphatidylinositol phosphate synthase</fullName>
        <shortName evidence="5">PIP synthase</shortName>
        <ecNumber evidence="4">2.7.8.-</ecNumber>
    </recommendedName>
    <alternativeName>
        <fullName>CDP-diacylglycerol--D-myo-inositol-3-phosphate 3-phosphatidyltransferase</fullName>
    </alternativeName>
</protein>
<sequence>MSGLLSRETFAKITNPLASALLRAGFTPDTVTIFGTAASVVAALTLFPTGHLFWGGMAVWLFAMFDMLDGAMARARGGGTRFGAVLDATCDRVADGAVFAGLVWWAAFGWGSTSLVVATLICMITSQVISYVKARAEASGLRADGGLIERPERLIIVLAGAIFSGGFGVQWPLHTAMWVLAVASLVTVAQRMHAVRTSPGALDLLPNSDAGQDTAETNQP</sequence>
<feature type="chain" id="PRO_0000448361" description="Phosphatidylinositol phosphate synthase">
    <location>
        <begin position="1"/>
        <end position="220"/>
    </location>
</feature>
<feature type="transmembrane region" description="Helical" evidence="2">
    <location>
        <begin position="21"/>
        <end position="46"/>
    </location>
</feature>
<feature type="transmembrane region" description="Helical" evidence="2">
    <location>
        <begin position="52"/>
        <end position="72"/>
    </location>
</feature>
<feature type="transmembrane region" description="Helical" evidence="2">
    <location>
        <begin position="93"/>
        <end position="110"/>
    </location>
</feature>
<feature type="transmembrane region" description="Helical" evidence="2">
    <location>
        <begin position="116"/>
        <end position="134"/>
    </location>
</feature>
<feature type="transmembrane region" description="Helical" evidence="2">
    <location>
        <begin position="154"/>
        <end position="171"/>
    </location>
</feature>
<feature type="transmembrane region" description="Helical" evidence="2">
    <location>
        <begin position="177"/>
        <end position="194"/>
    </location>
</feature>
<feature type="active site" description="Proton acceptor" evidence="1">
    <location>
        <position position="91"/>
    </location>
</feature>
<feature type="binding site" evidence="1">
    <location>
        <begin position="29"/>
        <end position="32"/>
    </location>
    <ligand>
        <name>a CDP-1,2-diacyl-sn-glycerol</name>
        <dbReference type="ChEBI" id="CHEBI:58332"/>
    </ligand>
</feature>
<feature type="binding site" evidence="1">
    <location>
        <position position="66"/>
    </location>
    <ligand>
        <name>Mg(2+)</name>
        <dbReference type="ChEBI" id="CHEBI:18420"/>
        <label>1</label>
    </ligand>
</feature>
<feature type="binding site" evidence="1">
    <location>
        <position position="66"/>
    </location>
    <ligand>
        <name>Mg(2+)</name>
        <dbReference type="ChEBI" id="CHEBI:18420"/>
        <label>2</label>
    </ligand>
</feature>
<feature type="binding site" evidence="1">
    <location>
        <position position="69"/>
    </location>
    <ligand>
        <name>Mg(2+)</name>
        <dbReference type="ChEBI" id="CHEBI:18420"/>
        <label>1</label>
    </ligand>
</feature>
<feature type="binding site" evidence="1">
    <location>
        <position position="70"/>
    </location>
    <ligand>
        <name>a CDP-1,2-diacyl-sn-glycerol</name>
        <dbReference type="ChEBI" id="CHEBI:58332"/>
    </ligand>
</feature>
<feature type="binding site" evidence="1">
    <location>
        <position position="74"/>
    </location>
    <ligand>
        <name>a CDP-1,2-diacyl-sn-glycerol</name>
        <dbReference type="ChEBI" id="CHEBI:58332"/>
    </ligand>
</feature>
<feature type="binding site" evidence="1">
    <location>
        <position position="80"/>
    </location>
    <ligand>
        <name>a CDP-1,2-diacyl-sn-glycerol</name>
        <dbReference type="ChEBI" id="CHEBI:58332"/>
    </ligand>
</feature>
<feature type="binding site" evidence="1">
    <location>
        <position position="87"/>
    </location>
    <ligand>
        <name>Mg(2+)</name>
        <dbReference type="ChEBI" id="CHEBI:18420"/>
        <label>1</label>
    </ligand>
</feature>
<feature type="binding site" evidence="1">
    <location>
        <position position="87"/>
    </location>
    <ligand>
        <name>Mg(2+)</name>
        <dbReference type="ChEBI" id="CHEBI:18420"/>
        <label>2</label>
    </ligand>
</feature>
<feature type="binding site" evidence="1">
    <location>
        <position position="91"/>
    </location>
    <ligand>
        <name>Mg(2+)</name>
        <dbReference type="ChEBI" id="CHEBI:18420"/>
        <label>2</label>
    </ligand>
</feature>
<gene>
    <name evidence="6" type="ordered locus">MAB_2896c</name>
</gene>
<dbReference type="EC" id="2.7.8.-" evidence="4"/>
<dbReference type="EMBL" id="CU458896">
    <property type="protein sequence ID" value="CAM62975.1"/>
    <property type="molecule type" value="Genomic_DNA"/>
</dbReference>
<dbReference type="SMR" id="B1MCK4"/>
<dbReference type="GeneID" id="93379827"/>
<dbReference type="KEGG" id="mab:MAB_2896c"/>
<dbReference type="UniPathway" id="UPA00220"/>
<dbReference type="Proteomes" id="UP000007137">
    <property type="component" value="Chromosome"/>
</dbReference>
<dbReference type="GO" id="GO:0005886">
    <property type="term" value="C:plasma membrane"/>
    <property type="evidence" value="ECO:0007669"/>
    <property type="project" value="UniProtKB-SubCell"/>
</dbReference>
<dbReference type="GO" id="GO:0000287">
    <property type="term" value="F:magnesium ion binding"/>
    <property type="evidence" value="ECO:0007669"/>
    <property type="project" value="UniProtKB-UniRule"/>
</dbReference>
<dbReference type="GO" id="GO:0016780">
    <property type="term" value="F:phosphotransferase activity, for other substituted phosphate groups"/>
    <property type="evidence" value="ECO:0007669"/>
    <property type="project" value="UniProtKB-UniRule"/>
</dbReference>
<dbReference type="GO" id="GO:0008654">
    <property type="term" value="P:phospholipid biosynthetic process"/>
    <property type="evidence" value="ECO:0007669"/>
    <property type="project" value="UniProtKB-UniRule"/>
</dbReference>
<dbReference type="Gene3D" id="1.20.120.1760">
    <property type="match status" value="1"/>
</dbReference>
<dbReference type="HAMAP" id="MF_02241">
    <property type="entry name" value="PIP_synthase"/>
    <property type="match status" value="1"/>
</dbReference>
<dbReference type="InterPro" id="IPR000462">
    <property type="entry name" value="CDP-OH_P_trans"/>
</dbReference>
<dbReference type="InterPro" id="IPR043130">
    <property type="entry name" value="CDP-OH_PTrfase_TM_dom"/>
</dbReference>
<dbReference type="InterPro" id="IPR048254">
    <property type="entry name" value="CDP_ALCOHOL_P_TRANSF_CS"/>
</dbReference>
<dbReference type="InterPro" id="IPR044268">
    <property type="entry name" value="PIP_synthase_PgsA1"/>
</dbReference>
<dbReference type="NCBIfam" id="NF045883">
    <property type="entry name" value="PIPSynth"/>
    <property type="match status" value="1"/>
</dbReference>
<dbReference type="Pfam" id="PF01066">
    <property type="entry name" value="CDP-OH_P_transf"/>
    <property type="match status" value="1"/>
</dbReference>
<dbReference type="PROSITE" id="PS00379">
    <property type="entry name" value="CDP_ALCOHOL_P_TRANSF"/>
    <property type="match status" value="1"/>
</dbReference>
<evidence type="ECO:0000250" key="1">
    <source>
        <dbReference type="UniProtKB" id="P9WPG7"/>
    </source>
</evidence>
<evidence type="ECO:0000255" key="2"/>
<evidence type="ECO:0000255" key="3">
    <source>
        <dbReference type="HAMAP-Rule" id="MF_02241"/>
    </source>
</evidence>
<evidence type="ECO:0000269" key="4">
    <source>
    </source>
</evidence>
<evidence type="ECO:0000303" key="5">
    <source>
    </source>
</evidence>
<evidence type="ECO:0000312" key="6">
    <source>
        <dbReference type="EMBL" id="CAM62975.1"/>
    </source>
</evidence>
<reference key="1">
    <citation type="journal article" date="2009" name="PLoS ONE">
        <title>Non mycobacterial virulence genes in the genome of the emerging pathogen Mycobacterium abscessus.</title>
        <authorList>
            <person name="Ripoll F."/>
            <person name="Pasek S."/>
            <person name="Schenowitz C."/>
            <person name="Dossat C."/>
            <person name="Barbe V."/>
            <person name="Rottman M."/>
            <person name="Macheras E."/>
            <person name="Heym B."/>
            <person name="Herrmann J.L."/>
            <person name="Daffe M."/>
            <person name="Brosch R."/>
            <person name="Risler J.L."/>
            <person name="Gaillard J.L."/>
        </authorList>
    </citation>
    <scope>NUCLEOTIDE SEQUENCE [LARGE SCALE GENOMIC DNA]</scope>
    <source>
        <strain>ATCC 19977 / DSM 44196 / CCUG 20993 / CIP 104536 / JCM 13569 / NCTC 13031 / TMC 1543 / L948</strain>
    </source>
</reference>
<reference key="2">
    <citation type="journal article" date="2010" name="J. Biochem.">
        <title>A revised biosynthetic pathway for phosphatidylinositol in Mycobacteria.</title>
        <authorList>
            <person name="Morii H."/>
            <person name="Ogawa M."/>
            <person name="Fukuda K."/>
            <person name="Taniguchi H."/>
            <person name="Koga Y."/>
        </authorList>
    </citation>
    <scope>FUNCTION</scope>
    <scope>CATALYTIC ACTIVITY</scope>
    <scope>PATHWAY</scope>
</reference>
<keyword id="KW-1003">Cell membrane</keyword>
<keyword id="KW-0460">Magnesium</keyword>
<keyword id="KW-0472">Membrane</keyword>
<keyword id="KW-0479">Metal-binding</keyword>
<keyword id="KW-1185">Reference proteome</keyword>
<keyword id="KW-0808">Transferase</keyword>
<keyword id="KW-0812">Transmembrane</keyword>
<keyword id="KW-1133">Transmembrane helix</keyword>
<accession>B1MCK4</accession>
<proteinExistence type="evidence at protein level"/>
<name>PIPS_MYCA9</name>
<organism>
    <name type="scientific">Mycobacteroides abscessus (strain ATCC 19977 / DSM 44196 / CCUG 20993 / CIP 104536 / JCM 13569 / NCTC 13031 / TMC 1543 / L948)</name>
    <name type="common">Mycobacterium abscessus</name>
    <dbReference type="NCBI Taxonomy" id="561007"/>
    <lineage>
        <taxon>Bacteria</taxon>
        <taxon>Bacillati</taxon>
        <taxon>Actinomycetota</taxon>
        <taxon>Actinomycetes</taxon>
        <taxon>Mycobacteriales</taxon>
        <taxon>Mycobacteriaceae</taxon>
        <taxon>Mycobacteroides</taxon>
        <taxon>Mycobacteroides abscessus</taxon>
    </lineage>
</organism>